<evidence type="ECO:0000255" key="1"/>
<evidence type="ECO:0000305" key="2"/>
<accession>P51700</accession>
<name>YO01_BPHC1</name>
<organismHost>
    <name type="scientific">Haemophilus influenzae</name>
    <dbReference type="NCBI Taxonomy" id="727"/>
</organismHost>
<feature type="chain" id="PRO_0000165315" description="Uncharacterized 23.2 kDa protein in int-C1 intergenic region">
    <location>
        <begin position="1"/>
        <end position="205"/>
    </location>
</feature>
<feature type="transmembrane region" description="Helical" evidence="1">
    <location>
        <begin position="12"/>
        <end position="32"/>
    </location>
</feature>
<feature type="transmembrane region" description="Helical" evidence="1">
    <location>
        <begin position="49"/>
        <end position="69"/>
    </location>
</feature>
<proteinExistence type="predicted"/>
<protein>
    <recommendedName>
        <fullName>Uncharacterized 23.2 kDa protein in int-C1 intergenic region</fullName>
    </recommendedName>
    <alternativeName>
        <fullName>ORF1</fullName>
    </alternativeName>
</protein>
<reference key="1">
    <citation type="journal article" date="1994" name="Mol. Microbiol.">
        <title>Identification of an HP1 phage protein required for site-specific excision.</title>
        <authorList>
            <person name="Esposito D."/>
            <person name="Scocca J.J."/>
        </authorList>
    </citation>
    <scope>NUCLEOTIDE SEQUENCE [GENOMIC DNA]</scope>
</reference>
<reference key="2">
    <citation type="journal article" date="1996" name="Nucleic Acids Res.">
        <title>The complete nucleotide sequence of bacteriophage HP1 DNA.</title>
        <authorList>
            <person name="Esposito D."/>
            <person name="Fitzmaurice W.P."/>
            <person name="Benjamin R.C."/>
            <person name="Goodman S.D."/>
            <person name="Waldman A.S."/>
            <person name="Scocca J.J."/>
        </authorList>
    </citation>
    <scope>NUCLEOTIDE SEQUENCE [LARGE SCALE GENOMIC DNA]</scope>
</reference>
<keyword id="KW-1043">Host membrane</keyword>
<keyword id="KW-0472">Membrane</keyword>
<keyword id="KW-1185">Reference proteome</keyword>
<keyword id="KW-0812">Transmembrane</keyword>
<keyword id="KW-1133">Transmembrane helix</keyword>
<comment type="subcellular location">
    <subcellularLocation>
        <location evidence="2">Host membrane</location>
        <topology evidence="2">Multi-pass membrane protein</topology>
    </subcellularLocation>
</comment>
<sequence>MKNLFYALKEHWQIYVGLLLGLIIGLLVGVGFTDWKSLVRGLDSKVTDWISSLSTLIIMCFTAVGVMSWKKQKTPDLKSKVAKNIIDFDTHAVLLPSKKFQSIDEIKEYNAIQLKIFWDIEHSLSTLYMFDKSNKQEIDTILGYLLKDINSATSLIEKHARYDEVGRYQLVSLINNGYKNTYPNTTKLFELVVGKSNVVGLNGSS</sequence>
<organism>
    <name type="scientific">Haemophilus phage HP1 (strain HP1c1)</name>
    <name type="common">Bacteriophage HP1</name>
    <dbReference type="NCBI Taxonomy" id="1289570"/>
    <lineage>
        <taxon>Viruses</taxon>
        <taxon>Duplodnaviria</taxon>
        <taxon>Heunggongvirae</taxon>
        <taxon>Uroviricota</taxon>
        <taxon>Caudoviricetes</taxon>
        <taxon>Peduoviridae</taxon>
        <taxon>Hpunavirus</taxon>
        <taxon>Haemophilus phage HP1</taxon>
    </lineage>
</organism>
<dbReference type="EMBL" id="U24159">
    <property type="protein sequence ID" value="AAB09183.1"/>
    <property type="molecule type" value="Genomic_DNA"/>
</dbReference>
<dbReference type="PIR" id="S69504">
    <property type="entry name" value="S69504"/>
</dbReference>
<dbReference type="RefSeq" id="NP_043467.1">
    <property type="nucleotide sequence ID" value="NC_001697.1"/>
</dbReference>
<dbReference type="SMR" id="P51700"/>
<dbReference type="GeneID" id="1261143"/>
<dbReference type="KEGG" id="vg:1261143"/>
<dbReference type="Proteomes" id="UP000001713">
    <property type="component" value="Segment"/>
</dbReference>
<dbReference type="GO" id="GO:0033644">
    <property type="term" value="C:host cell membrane"/>
    <property type="evidence" value="ECO:0007669"/>
    <property type="project" value="UniProtKB-SubCell"/>
</dbReference>
<dbReference type="GO" id="GO:0016020">
    <property type="term" value="C:membrane"/>
    <property type="evidence" value="ECO:0007669"/>
    <property type="project" value="UniProtKB-KW"/>
</dbReference>